<reference key="1">
    <citation type="journal article" date="2005" name="J. Bacteriol.">
        <title>Complete genome sequence and analysis of the multiresistant nosocomial pathogen Corynebacterium jeikeium K411, a lipid-requiring bacterium of the human skin flora.</title>
        <authorList>
            <person name="Tauch A."/>
            <person name="Kaiser O."/>
            <person name="Hain T."/>
            <person name="Goesmann A."/>
            <person name="Weisshaar B."/>
            <person name="Albersmeier A."/>
            <person name="Bekel T."/>
            <person name="Bischoff N."/>
            <person name="Brune I."/>
            <person name="Chakraborty T."/>
            <person name="Kalinowski J."/>
            <person name="Meyer F."/>
            <person name="Rupp O."/>
            <person name="Schneiker S."/>
            <person name="Viehoever P."/>
            <person name="Puehler A."/>
        </authorList>
    </citation>
    <scope>NUCLEOTIDE SEQUENCE [LARGE SCALE GENOMIC DNA]</scope>
    <source>
        <strain>K411</strain>
    </source>
</reference>
<gene>
    <name evidence="1" type="primary">rplI</name>
    <name type="ordered locus">jk2064</name>
</gene>
<organism>
    <name type="scientific">Corynebacterium jeikeium (strain K411)</name>
    <dbReference type="NCBI Taxonomy" id="306537"/>
    <lineage>
        <taxon>Bacteria</taxon>
        <taxon>Bacillati</taxon>
        <taxon>Actinomycetota</taxon>
        <taxon>Actinomycetes</taxon>
        <taxon>Mycobacteriales</taxon>
        <taxon>Corynebacteriaceae</taxon>
        <taxon>Corynebacterium</taxon>
    </lineage>
</organism>
<dbReference type="EMBL" id="CR931997">
    <property type="protein sequence ID" value="CAI38246.1"/>
    <property type="molecule type" value="Genomic_DNA"/>
</dbReference>
<dbReference type="RefSeq" id="WP_005292476.1">
    <property type="nucleotide sequence ID" value="NC_007164.1"/>
</dbReference>
<dbReference type="SMR" id="Q4JSG1"/>
<dbReference type="STRING" id="306537.jk2064"/>
<dbReference type="GeneID" id="92739697"/>
<dbReference type="KEGG" id="cjk:jk2064"/>
<dbReference type="eggNOG" id="COG0359">
    <property type="taxonomic scope" value="Bacteria"/>
</dbReference>
<dbReference type="HOGENOM" id="CLU_078938_5_1_11"/>
<dbReference type="OrthoDB" id="9788336at2"/>
<dbReference type="Proteomes" id="UP000000545">
    <property type="component" value="Chromosome"/>
</dbReference>
<dbReference type="GO" id="GO:1990904">
    <property type="term" value="C:ribonucleoprotein complex"/>
    <property type="evidence" value="ECO:0007669"/>
    <property type="project" value="UniProtKB-KW"/>
</dbReference>
<dbReference type="GO" id="GO:0005840">
    <property type="term" value="C:ribosome"/>
    <property type="evidence" value="ECO:0007669"/>
    <property type="project" value="UniProtKB-KW"/>
</dbReference>
<dbReference type="GO" id="GO:0019843">
    <property type="term" value="F:rRNA binding"/>
    <property type="evidence" value="ECO:0007669"/>
    <property type="project" value="UniProtKB-UniRule"/>
</dbReference>
<dbReference type="GO" id="GO:0003735">
    <property type="term" value="F:structural constituent of ribosome"/>
    <property type="evidence" value="ECO:0007669"/>
    <property type="project" value="InterPro"/>
</dbReference>
<dbReference type="GO" id="GO:0006412">
    <property type="term" value="P:translation"/>
    <property type="evidence" value="ECO:0007669"/>
    <property type="project" value="UniProtKB-UniRule"/>
</dbReference>
<dbReference type="FunFam" id="3.40.5.10:FF:000003">
    <property type="entry name" value="50S ribosomal protein L9"/>
    <property type="match status" value="1"/>
</dbReference>
<dbReference type="Gene3D" id="3.10.430.100">
    <property type="entry name" value="Ribosomal protein L9, C-terminal domain"/>
    <property type="match status" value="1"/>
</dbReference>
<dbReference type="Gene3D" id="3.40.5.10">
    <property type="entry name" value="Ribosomal protein L9, N-terminal domain"/>
    <property type="match status" value="1"/>
</dbReference>
<dbReference type="HAMAP" id="MF_00503">
    <property type="entry name" value="Ribosomal_bL9"/>
    <property type="match status" value="1"/>
</dbReference>
<dbReference type="InterPro" id="IPR000244">
    <property type="entry name" value="Ribosomal_bL9"/>
</dbReference>
<dbReference type="InterPro" id="IPR009027">
    <property type="entry name" value="Ribosomal_bL9/RNase_H1_N"/>
</dbReference>
<dbReference type="InterPro" id="IPR020594">
    <property type="entry name" value="Ribosomal_bL9_bac/chp"/>
</dbReference>
<dbReference type="InterPro" id="IPR020069">
    <property type="entry name" value="Ribosomal_bL9_C"/>
</dbReference>
<dbReference type="InterPro" id="IPR036791">
    <property type="entry name" value="Ribosomal_bL9_C_sf"/>
</dbReference>
<dbReference type="InterPro" id="IPR020070">
    <property type="entry name" value="Ribosomal_bL9_N"/>
</dbReference>
<dbReference type="InterPro" id="IPR036935">
    <property type="entry name" value="Ribosomal_bL9_N_sf"/>
</dbReference>
<dbReference type="NCBIfam" id="TIGR00158">
    <property type="entry name" value="L9"/>
    <property type="match status" value="1"/>
</dbReference>
<dbReference type="PANTHER" id="PTHR21368">
    <property type="entry name" value="50S RIBOSOMAL PROTEIN L9"/>
    <property type="match status" value="1"/>
</dbReference>
<dbReference type="Pfam" id="PF03948">
    <property type="entry name" value="Ribosomal_L9_C"/>
    <property type="match status" value="1"/>
</dbReference>
<dbReference type="Pfam" id="PF01281">
    <property type="entry name" value="Ribosomal_L9_N"/>
    <property type="match status" value="1"/>
</dbReference>
<dbReference type="SUPFAM" id="SSF55658">
    <property type="entry name" value="L9 N-domain-like"/>
    <property type="match status" value="1"/>
</dbReference>
<dbReference type="SUPFAM" id="SSF55653">
    <property type="entry name" value="Ribosomal protein L9 C-domain"/>
    <property type="match status" value="1"/>
</dbReference>
<dbReference type="PROSITE" id="PS00651">
    <property type="entry name" value="RIBOSOMAL_L9"/>
    <property type="match status" value="1"/>
</dbReference>
<name>RL9_CORJK</name>
<comment type="function">
    <text evidence="1">Binds to the 23S rRNA.</text>
</comment>
<comment type="similarity">
    <text evidence="1">Belongs to the bacterial ribosomal protein bL9 family.</text>
</comment>
<proteinExistence type="inferred from homology"/>
<evidence type="ECO:0000255" key="1">
    <source>
        <dbReference type="HAMAP-Rule" id="MF_00503"/>
    </source>
</evidence>
<evidence type="ECO:0000305" key="2"/>
<protein>
    <recommendedName>
        <fullName evidence="1">Large ribosomal subunit protein bL9</fullName>
    </recommendedName>
    <alternativeName>
        <fullName evidence="2">50S ribosomal protein L9</fullName>
    </alternativeName>
</protein>
<accession>Q4JSG1</accession>
<sequence>MKLILTANVDNLGVPGDIVEVKAGYGRNYLLPRGYAIVATRGAEKQIEGIKRAQEARQIRDLDHAREVKEELENLSGVTISVRTAESGKMFGSVTADNIVDAVKKANGRSLDKHSIKLRKGDVKATGVYSVDVQLHEGIVASLSFEVVSA</sequence>
<feature type="chain" id="PRO_0000236512" description="Large ribosomal subunit protein bL9">
    <location>
        <begin position="1"/>
        <end position="150"/>
    </location>
</feature>
<keyword id="KW-1185">Reference proteome</keyword>
<keyword id="KW-0687">Ribonucleoprotein</keyword>
<keyword id="KW-0689">Ribosomal protein</keyword>
<keyword id="KW-0694">RNA-binding</keyword>
<keyword id="KW-0699">rRNA-binding</keyword>